<accession>B5XMM1</accession>
<proteinExistence type="inferred from homology"/>
<feature type="chain" id="PRO_1000126360" description="Probable transaldolase">
    <location>
        <begin position="1"/>
        <end position="214"/>
    </location>
</feature>
<feature type="active site" description="Schiff-base intermediate with substrate" evidence="1">
    <location>
        <position position="83"/>
    </location>
</feature>
<protein>
    <recommendedName>
        <fullName evidence="1">Probable transaldolase</fullName>
        <ecNumber evidence="1">2.2.1.2</ecNumber>
    </recommendedName>
</protein>
<evidence type="ECO:0000255" key="1">
    <source>
        <dbReference type="HAMAP-Rule" id="MF_00494"/>
    </source>
</evidence>
<reference key="1">
    <citation type="journal article" date="2008" name="J. Bacteriol.">
        <title>Genome sequence of a nephritogenic and highly transformable M49 strain of Streptococcus pyogenes.</title>
        <authorList>
            <person name="McShan W.M."/>
            <person name="Ferretti J.J."/>
            <person name="Karasawa T."/>
            <person name="Suvorov A.N."/>
            <person name="Lin S."/>
            <person name="Qin B."/>
            <person name="Jia H."/>
            <person name="Kenton S."/>
            <person name="Najar F."/>
            <person name="Wu H."/>
            <person name="Scott J."/>
            <person name="Roe B.A."/>
            <person name="Savic D.J."/>
        </authorList>
    </citation>
    <scope>NUCLEOTIDE SEQUENCE [LARGE SCALE GENOMIC DNA]</scope>
    <source>
        <strain>NZ131</strain>
    </source>
</reference>
<keyword id="KW-0963">Cytoplasm</keyword>
<keyword id="KW-0570">Pentose shunt</keyword>
<keyword id="KW-0704">Schiff base</keyword>
<keyword id="KW-0808">Transferase</keyword>
<dbReference type="EC" id="2.2.1.2" evidence="1"/>
<dbReference type="EMBL" id="CP000829">
    <property type="protein sequence ID" value="ACI61583.1"/>
    <property type="molecule type" value="Genomic_DNA"/>
</dbReference>
<dbReference type="SMR" id="B5XMM1"/>
<dbReference type="KEGG" id="soz:Spy49_1301c"/>
<dbReference type="HOGENOM" id="CLU_079764_0_0_9"/>
<dbReference type="UniPathway" id="UPA00115">
    <property type="reaction ID" value="UER00414"/>
</dbReference>
<dbReference type="Proteomes" id="UP000001039">
    <property type="component" value="Chromosome"/>
</dbReference>
<dbReference type="GO" id="GO:0005737">
    <property type="term" value="C:cytoplasm"/>
    <property type="evidence" value="ECO:0007669"/>
    <property type="project" value="UniProtKB-SubCell"/>
</dbReference>
<dbReference type="GO" id="GO:0016832">
    <property type="term" value="F:aldehyde-lyase activity"/>
    <property type="evidence" value="ECO:0007669"/>
    <property type="project" value="InterPro"/>
</dbReference>
<dbReference type="GO" id="GO:0004801">
    <property type="term" value="F:transaldolase activity"/>
    <property type="evidence" value="ECO:0007669"/>
    <property type="project" value="UniProtKB-UniRule"/>
</dbReference>
<dbReference type="GO" id="GO:0005975">
    <property type="term" value="P:carbohydrate metabolic process"/>
    <property type="evidence" value="ECO:0007669"/>
    <property type="project" value="InterPro"/>
</dbReference>
<dbReference type="GO" id="GO:0006098">
    <property type="term" value="P:pentose-phosphate shunt"/>
    <property type="evidence" value="ECO:0007669"/>
    <property type="project" value="UniProtKB-UniRule"/>
</dbReference>
<dbReference type="CDD" id="cd00956">
    <property type="entry name" value="Transaldolase_FSA"/>
    <property type="match status" value="1"/>
</dbReference>
<dbReference type="FunFam" id="3.20.20.70:FF:000018">
    <property type="entry name" value="Probable transaldolase"/>
    <property type="match status" value="1"/>
</dbReference>
<dbReference type="Gene3D" id="3.20.20.70">
    <property type="entry name" value="Aldolase class I"/>
    <property type="match status" value="1"/>
</dbReference>
<dbReference type="HAMAP" id="MF_00494">
    <property type="entry name" value="Transaldolase_3b"/>
    <property type="match status" value="1"/>
</dbReference>
<dbReference type="InterPro" id="IPR013785">
    <property type="entry name" value="Aldolase_TIM"/>
</dbReference>
<dbReference type="InterPro" id="IPR001585">
    <property type="entry name" value="TAL/FSA"/>
</dbReference>
<dbReference type="InterPro" id="IPR022999">
    <property type="entry name" value="Transaldolase_3B"/>
</dbReference>
<dbReference type="InterPro" id="IPR004731">
    <property type="entry name" value="Transaldolase_3B/F6P_aldolase"/>
</dbReference>
<dbReference type="InterPro" id="IPR018225">
    <property type="entry name" value="Transaldolase_AS"/>
</dbReference>
<dbReference type="InterPro" id="IPR033919">
    <property type="entry name" value="TSA/FSA_arc/bac"/>
</dbReference>
<dbReference type="NCBIfam" id="TIGR00875">
    <property type="entry name" value="fsa_talC_mipB"/>
    <property type="match status" value="1"/>
</dbReference>
<dbReference type="PANTHER" id="PTHR10683">
    <property type="entry name" value="TRANSALDOLASE"/>
    <property type="match status" value="1"/>
</dbReference>
<dbReference type="PANTHER" id="PTHR10683:SF36">
    <property type="entry name" value="TRANSALDOLASE"/>
    <property type="match status" value="1"/>
</dbReference>
<dbReference type="Pfam" id="PF00923">
    <property type="entry name" value="TAL_FSA"/>
    <property type="match status" value="1"/>
</dbReference>
<dbReference type="SUPFAM" id="SSF51569">
    <property type="entry name" value="Aldolase"/>
    <property type="match status" value="1"/>
</dbReference>
<dbReference type="PROSITE" id="PS01054">
    <property type="entry name" value="TRANSALDOLASE_1"/>
    <property type="match status" value="1"/>
</dbReference>
<dbReference type="PROSITE" id="PS00958">
    <property type="entry name" value="TRANSALDOLASE_2"/>
    <property type="match status" value="1"/>
</dbReference>
<organism>
    <name type="scientific">Streptococcus pyogenes serotype M49 (strain NZ131)</name>
    <dbReference type="NCBI Taxonomy" id="471876"/>
    <lineage>
        <taxon>Bacteria</taxon>
        <taxon>Bacillati</taxon>
        <taxon>Bacillota</taxon>
        <taxon>Bacilli</taxon>
        <taxon>Lactobacillales</taxon>
        <taxon>Streptococcaceae</taxon>
        <taxon>Streptococcus</taxon>
    </lineage>
</organism>
<name>TAL_STRPZ</name>
<comment type="function">
    <text evidence="1">Transaldolase is important for the balance of metabolites in the pentose-phosphate pathway.</text>
</comment>
<comment type="catalytic activity">
    <reaction evidence="1">
        <text>D-sedoheptulose 7-phosphate + D-glyceraldehyde 3-phosphate = D-erythrose 4-phosphate + beta-D-fructose 6-phosphate</text>
        <dbReference type="Rhea" id="RHEA:17053"/>
        <dbReference type="ChEBI" id="CHEBI:16897"/>
        <dbReference type="ChEBI" id="CHEBI:57483"/>
        <dbReference type="ChEBI" id="CHEBI:57634"/>
        <dbReference type="ChEBI" id="CHEBI:59776"/>
        <dbReference type="EC" id="2.2.1.2"/>
    </reaction>
</comment>
<comment type="pathway">
    <text evidence="1">Carbohydrate degradation; pentose phosphate pathway; D-glyceraldehyde 3-phosphate and beta-D-fructose 6-phosphate from D-ribose 5-phosphate and D-xylulose 5-phosphate (non-oxidative stage): step 2/3.</text>
</comment>
<comment type="subcellular location">
    <subcellularLocation>
        <location evidence="1">Cytoplasm</location>
    </subcellularLocation>
</comment>
<comment type="similarity">
    <text evidence="1">Belongs to the transaldolase family. Type 3B subfamily.</text>
</comment>
<sequence length="214" mass="23272">MKFFLDTANVAAIKAINELGVVDGVTTNPTIISREGRDFETVIKEICDIVDGPISAEVTGLTADAMVEEARSIAKWHDNVVVKIPMTTEGLKATNILSKEGIKTNVTLIFTVSQGLMAMKAGATYISPFIGRLEDIGTDAYQLISDLREIIDLYDFQAEIIAASIRTTAHVEAVAKLGAHIATIPDPLFAKMTQHPLTTNGLKTFMEDWASFKK</sequence>
<gene>
    <name evidence="1" type="primary">tal</name>
    <name type="ordered locus">Spy49_1301c</name>
</gene>